<feature type="chain" id="PRO_0000263152" description="Bifunctional protein GlmU">
    <location>
        <begin position="1"/>
        <end position="468"/>
    </location>
</feature>
<feature type="region of interest" description="Pyrophosphorylase" evidence="1">
    <location>
        <begin position="1"/>
        <end position="233"/>
    </location>
</feature>
<feature type="region of interest" description="Linker" evidence="1">
    <location>
        <begin position="234"/>
        <end position="254"/>
    </location>
</feature>
<feature type="region of interest" description="N-acetyltransferase" evidence="1">
    <location>
        <begin position="255"/>
        <end position="468"/>
    </location>
</feature>
<feature type="active site" description="Proton acceptor" evidence="1">
    <location>
        <position position="366"/>
    </location>
</feature>
<feature type="binding site" evidence="1">
    <location>
        <begin position="15"/>
        <end position="18"/>
    </location>
    <ligand>
        <name>UDP-N-acetyl-alpha-D-glucosamine</name>
        <dbReference type="ChEBI" id="CHEBI:57705"/>
    </ligand>
</feature>
<feature type="binding site" evidence="1">
    <location>
        <position position="29"/>
    </location>
    <ligand>
        <name>UDP-N-acetyl-alpha-D-glucosamine</name>
        <dbReference type="ChEBI" id="CHEBI:57705"/>
    </ligand>
</feature>
<feature type="binding site" evidence="1">
    <location>
        <position position="79"/>
    </location>
    <ligand>
        <name>UDP-N-acetyl-alpha-D-glucosamine</name>
        <dbReference type="ChEBI" id="CHEBI:57705"/>
    </ligand>
</feature>
<feature type="binding site" evidence="1">
    <location>
        <begin position="84"/>
        <end position="85"/>
    </location>
    <ligand>
        <name>UDP-N-acetyl-alpha-D-glucosamine</name>
        <dbReference type="ChEBI" id="CHEBI:57705"/>
    </ligand>
</feature>
<feature type="binding site" evidence="1">
    <location>
        <position position="109"/>
    </location>
    <ligand>
        <name>Mg(2+)</name>
        <dbReference type="ChEBI" id="CHEBI:18420"/>
    </ligand>
</feature>
<feature type="binding site" evidence="1">
    <location>
        <position position="146"/>
    </location>
    <ligand>
        <name>UDP-N-acetyl-alpha-D-glucosamine</name>
        <dbReference type="ChEBI" id="CHEBI:57705"/>
    </ligand>
</feature>
<feature type="binding site" evidence="1">
    <location>
        <position position="159"/>
    </location>
    <ligand>
        <name>UDP-N-acetyl-alpha-D-glucosamine</name>
        <dbReference type="ChEBI" id="CHEBI:57705"/>
    </ligand>
</feature>
<feature type="binding site" evidence="1">
    <location>
        <position position="174"/>
    </location>
    <ligand>
        <name>UDP-N-acetyl-alpha-D-glucosamine</name>
        <dbReference type="ChEBI" id="CHEBI:57705"/>
    </ligand>
</feature>
<feature type="binding site" evidence="1">
    <location>
        <position position="231"/>
    </location>
    <ligand>
        <name>Mg(2+)</name>
        <dbReference type="ChEBI" id="CHEBI:18420"/>
    </ligand>
</feature>
<feature type="binding site" evidence="1">
    <location>
        <position position="231"/>
    </location>
    <ligand>
        <name>UDP-N-acetyl-alpha-D-glucosamine</name>
        <dbReference type="ChEBI" id="CHEBI:57705"/>
    </ligand>
</feature>
<feature type="binding site" evidence="1">
    <location>
        <position position="336"/>
    </location>
    <ligand>
        <name>UDP-N-acetyl-alpha-D-glucosamine</name>
        <dbReference type="ChEBI" id="CHEBI:57705"/>
    </ligand>
</feature>
<feature type="binding site" evidence="1">
    <location>
        <position position="354"/>
    </location>
    <ligand>
        <name>UDP-N-acetyl-alpha-D-glucosamine</name>
        <dbReference type="ChEBI" id="CHEBI:57705"/>
    </ligand>
</feature>
<feature type="binding site" evidence="1">
    <location>
        <position position="369"/>
    </location>
    <ligand>
        <name>UDP-N-acetyl-alpha-D-glucosamine</name>
        <dbReference type="ChEBI" id="CHEBI:57705"/>
    </ligand>
</feature>
<feature type="binding site" evidence="1">
    <location>
        <position position="380"/>
    </location>
    <ligand>
        <name>UDP-N-acetyl-alpha-D-glucosamine</name>
        <dbReference type="ChEBI" id="CHEBI:57705"/>
    </ligand>
</feature>
<feature type="binding site" evidence="1">
    <location>
        <position position="383"/>
    </location>
    <ligand>
        <name>acetyl-CoA</name>
        <dbReference type="ChEBI" id="CHEBI:57288"/>
    </ligand>
</feature>
<feature type="binding site" evidence="1">
    <location>
        <begin position="389"/>
        <end position="390"/>
    </location>
    <ligand>
        <name>acetyl-CoA</name>
        <dbReference type="ChEBI" id="CHEBI:57288"/>
    </ligand>
</feature>
<feature type="binding site" evidence="1">
    <location>
        <position position="426"/>
    </location>
    <ligand>
        <name>acetyl-CoA</name>
        <dbReference type="ChEBI" id="CHEBI:57288"/>
    </ligand>
</feature>
<dbReference type="EC" id="2.7.7.23" evidence="1"/>
<dbReference type="EC" id="2.3.1.157" evidence="1"/>
<dbReference type="EMBL" id="CP000386">
    <property type="protein sequence ID" value="ABG03861.1"/>
    <property type="molecule type" value="Genomic_DNA"/>
</dbReference>
<dbReference type="RefSeq" id="WP_011563879.1">
    <property type="nucleotide sequence ID" value="NC_008148.1"/>
</dbReference>
<dbReference type="SMR" id="Q1AXL7"/>
<dbReference type="STRING" id="266117.Rxyl_0894"/>
<dbReference type="KEGG" id="rxy:Rxyl_0894"/>
<dbReference type="eggNOG" id="COG1207">
    <property type="taxonomic scope" value="Bacteria"/>
</dbReference>
<dbReference type="HOGENOM" id="CLU_029499_15_2_11"/>
<dbReference type="OrthoDB" id="9775031at2"/>
<dbReference type="PhylomeDB" id="Q1AXL7"/>
<dbReference type="UniPathway" id="UPA00113">
    <property type="reaction ID" value="UER00532"/>
</dbReference>
<dbReference type="UniPathway" id="UPA00113">
    <property type="reaction ID" value="UER00533"/>
</dbReference>
<dbReference type="UniPathway" id="UPA00973"/>
<dbReference type="Proteomes" id="UP000006637">
    <property type="component" value="Chromosome"/>
</dbReference>
<dbReference type="GO" id="GO:0005737">
    <property type="term" value="C:cytoplasm"/>
    <property type="evidence" value="ECO:0007669"/>
    <property type="project" value="UniProtKB-SubCell"/>
</dbReference>
<dbReference type="GO" id="GO:0016020">
    <property type="term" value="C:membrane"/>
    <property type="evidence" value="ECO:0007669"/>
    <property type="project" value="GOC"/>
</dbReference>
<dbReference type="GO" id="GO:0019134">
    <property type="term" value="F:glucosamine-1-phosphate N-acetyltransferase activity"/>
    <property type="evidence" value="ECO:0007669"/>
    <property type="project" value="UniProtKB-UniRule"/>
</dbReference>
<dbReference type="GO" id="GO:0000287">
    <property type="term" value="F:magnesium ion binding"/>
    <property type="evidence" value="ECO:0007669"/>
    <property type="project" value="UniProtKB-UniRule"/>
</dbReference>
<dbReference type="GO" id="GO:0003977">
    <property type="term" value="F:UDP-N-acetylglucosamine diphosphorylase activity"/>
    <property type="evidence" value="ECO:0007669"/>
    <property type="project" value="UniProtKB-UniRule"/>
</dbReference>
<dbReference type="GO" id="GO:0000902">
    <property type="term" value="P:cell morphogenesis"/>
    <property type="evidence" value="ECO:0007669"/>
    <property type="project" value="UniProtKB-UniRule"/>
</dbReference>
<dbReference type="GO" id="GO:0071555">
    <property type="term" value="P:cell wall organization"/>
    <property type="evidence" value="ECO:0007669"/>
    <property type="project" value="UniProtKB-KW"/>
</dbReference>
<dbReference type="GO" id="GO:0009245">
    <property type="term" value="P:lipid A biosynthetic process"/>
    <property type="evidence" value="ECO:0007669"/>
    <property type="project" value="UniProtKB-UniRule"/>
</dbReference>
<dbReference type="GO" id="GO:0009252">
    <property type="term" value="P:peptidoglycan biosynthetic process"/>
    <property type="evidence" value="ECO:0007669"/>
    <property type="project" value="UniProtKB-UniRule"/>
</dbReference>
<dbReference type="GO" id="GO:0008360">
    <property type="term" value="P:regulation of cell shape"/>
    <property type="evidence" value="ECO:0007669"/>
    <property type="project" value="UniProtKB-KW"/>
</dbReference>
<dbReference type="GO" id="GO:0006048">
    <property type="term" value="P:UDP-N-acetylglucosamine biosynthetic process"/>
    <property type="evidence" value="ECO:0007669"/>
    <property type="project" value="UniProtKB-UniPathway"/>
</dbReference>
<dbReference type="CDD" id="cd02540">
    <property type="entry name" value="GT2_GlmU_N_bac"/>
    <property type="match status" value="1"/>
</dbReference>
<dbReference type="CDD" id="cd03353">
    <property type="entry name" value="LbH_GlmU_C"/>
    <property type="match status" value="1"/>
</dbReference>
<dbReference type="Gene3D" id="2.160.10.10">
    <property type="entry name" value="Hexapeptide repeat proteins"/>
    <property type="match status" value="1"/>
</dbReference>
<dbReference type="Gene3D" id="3.90.550.10">
    <property type="entry name" value="Spore Coat Polysaccharide Biosynthesis Protein SpsA, Chain A"/>
    <property type="match status" value="1"/>
</dbReference>
<dbReference type="HAMAP" id="MF_01631">
    <property type="entry name" value="GlmU"/>
    <property type="match status" value="1"/>
</dbReference>
<dbReference type="InterPro" id="IPR005882">
    <property type="entry name" value="Bifunctional_GlmU"/>
</dbReference>
<dbReference type="InterPro" id="IPR050065">
    <property type="entry name" value="GlmU-like"/>
</dbReference>
<dbReference type="InterPro" id="IPR038009">
    <property type="entry name" value="GlmU_C_LbH"/>
</dbReference>
<dbReference type="InterPro" id="IPR001451">
    <property type="entry name" value="Hexapep"/>
</dbReference>
<dbReference type="InterPro" id="IPR025877">
    <property type="entry name" value="MobA-like_NTP_Trfase"/>
</dbReference>
<dbReference type="InterPro" id="IPR029044">
    <property type="entry name" value="Nucleotide-diphossugar_trans"/>
</dbReference>
<dbReference type="InterPro" id="IPR011004">
    <property type="entry name" value="Trimer_LpxA-like_sf"/>
</dbReference>
<dbReference type="NCBIfam" id="TIGR01173">
    <property type="entry name" value="glmU"/>
    <property type="match status" value="1"/>
</dbReference>
<dbReference type="PANTHER" id="PTHR43584:SF3">
    <property type="entry name" value="BIFUNCTIONAL PROTEIN GLMU"/>
    <property type="match status" value="1"/>
</dbReference>
<dbReference type="PANTHER" id="PTHR43584">
    <property type="entry name" value="NUCLEOTIDYL TRANSFERASE"/>
    <property type="match status" value="1"/>
</dbReference>
<dbReference type="Pfam" id="PF00132">
    <property type="entry name" value="Hexapep"/>
    <property type="match status" value="1"/>
</dbReference>
<dbReference type="Pfam" id="PF12804">
    <property type="entry name" value="NTP_transf_3"/>
    <property type="match status" value="1"/>
</dbReference>
<dbReference type="SUPFAM" id="SSF53448">
    <property type="entry name" value="Nucleotide-diphospho-sugar transferases"/>
    <property type="match status" value="1"/>
</dbReference>
<dbReference type="SUPFAM" id="SSF51161">
    <property type="entry name" value="Trimeric LpxA-like enzymes"/>
    <property type="match status" value="1"/>
</dbReference>
<reference key="1">
    <citation type="submission" date="2006-06" db="EMBL/GenBank/DDBJ databases">
        <title>Complete sequence of Rubrobacter xylanophilus DSM 9941.</title>
        <authorList>
            <consortium name="US DOE Joint Genome Institute"/>
            <person name="Copeland A."/>
            <person name="Lucas S."/>
            <person name="Lapidus A."/>
            <person name="Barry K."/>
            <person name="Detter J.C."/>
            <person name="Glavina del Rio T."/>
            <person name="Hammon N."/>
            <person name="Israni S."/>
            <person name="Dalin E."/>
            <person name="Tice H."/>
            <person name="Pitluck S."/>
            <person name="Munk A.C."/>
            <person name="Brettin T."/>
            <person name="Bruce D."/>
            <person name="Han C."/>
            <person name="Tapia R."/>
            <person name="Gilna P."/>
            <person name="Schmutz J."/>
            <person name="Larimer F."/>
            <person name="Land M."/>
            <person name="Hauser L."/>
            <person name="Kyrpides N."/>
            <person name="Lykidis A."/>
            <person name="da Costa M.S."/>
            <person name="Rainey F.A."/>
            <person name="Empadinhas N."/>
            <person name="Jolivet E."/>
            <person name="Battista J.R."/>
            <person name="Richardson P."/>
        </authorList>
    </citation>
    <scope>NUCLEOTIDE SEQUENCE [LARGE SCALE GENOMIC DNA]</scope>
    <source>
        <strain>DSM 9941 / JCM 11954 / NBRC 16129 / PRD-1</strain>
    </source>
</reference>
<name>GLMU_RUBXD</name>
<organism>
    <name type="scientific">Rubrobacter xylanophilus (strain DSM 9941 / JCM 11954 / NBRC 16129 / PRD-1)</name>
    <dbReference type="NCBI Taxonomy" id="266117"/>
    <lineage>
        <taxon>Bacteria</taxon>
        <taxon>Bacillati</taxon>
        <taxon>Actinomycetota</taxon>
        <taxon>Rubrobacteria</taxon>
        <taxon>Rubrobacterales</taxon>
        <taxon>Rubrobacteraceae</taxon>
        <taxon>Rubrobacter</taxon>
    </lineage>
</organism>
<sequence length="468" mass="49718">MAQAGSASPLFAVVLAAGKGTRMKSNRAKVLHTLCGVPMVNYVIGAIRPLVPERLLVVVGHQAEQVRAVLPEDAEPVLQPEQRGTGDAVRVALEAIPEEEGVLLVVNGDGPLISDRTLGELLERHRSAGVGATVLVAELPDPSGLGRVREDAGVVRITEERDATEAERRNRLCNLGLYAFELPELRRAIREISSGAGRGELYLTDVLEIIGRRSRAVTYRLKDLEEANLVNDRSQLARAEEILRRRILDAHMKEGVTVRDPVSTHIEASVEIGRDTVILPGTFLRGRTRIGSDCVIGPSTDLVDTVVEDGATVEHSVGRGARVGRGAAVGPYAYLRPGTVLEEGSKVGAFCEVKNTRVGARSKVPHLSYVGDAEIGEDANLGAGTITANYDGAKKHRTVIEDGAFTGINTNLIAPVTIGQGAYLGAGSVVNKDIPPGKLAVGAPARVIRDAPGARSSSGDRRRARTEG</sequence>
<evidence type="ECO:0000255" key="1">
    <source>
        <dbReference type="HAMAP-Rule" id="MF_01631"/>
    </source>
</evidence>
<comment type="function">
    <text evidence="1">Catalyzes the last two sequential reactions in the de novo biosynthetic pathway for UDP-N-acetylglucosamine (UDP-GlcNAc). The C-terminal domain catalyzes the transfer of acetyl group from acetyl coenzyme A to glucosamine-1-phosphate (GlcN-1-P) to produce N-acetylglucosamine-1-phosphate (GlcNAc-1-P), which is converted into UDP-GlcNAc by the transfer of uridine 5-monophosphate (from uridine 5-triphosphate), a reaction catalyzed by the N-terminal domain.</text>
</comment>
<comment type="catalytic activity">
    <reaction evidence="1">
        <text>alpha-D-glucosamine 1-phosphate + acetyl-CoA = N-acetyl-alpha-D-glucosamine 1-phosphate + CoA + H(+)</text>
        <dbReference type="Rhea" id="RHEA:13725"/>
        <dbReference type="ChEBI" id="CHEBI:15378"/>
        <dbReference type="ChEBI" id="CHEBI:57287"/>
        <dbReference type="ChEBI" id="CHEBI:57288"/>
        <dbReference type="ChEBI" id="CHEBI:57776"/>
        <dbReference type="ChEBI" id="CHEBI:58516"/>
        <dbReference type="EC" id="2.3.1.157"/>
    </reaction>
</comment>
<comment type="catalytic activity">
    <reaction evidence="1">
        <text>N-acetyl-alpha-D-glucosamine 1-phosphate + UTP + H(+) = UDP-N-acetyl-alpha-D-glucosamine + diphosphate</text>
        <dbReference type="Rhea" id="RHEA:13509"/>
        <dbReference type="ChEBI" id="CHEBI:15378"/>
        <dbReference type="ChEBI" id="CHEBI:33019"/>
        <dbReference type="ChEBI" id="CHEBI:46398"/>
        <dbReference type="ChEBI" id="CHEBI:57705"/>
        <dbReference type="ChEBI" id="CHEBI:57776"/>
        <dbReference type="EC" id="2.7.7.23"/>
    </reaction>
</comment>
<comment type="cofactor">
    <cofactor evidence="1">
        <name>Mg(2+)</name>
        <dbReference type="ChEBI" id="CHEBI:18420"/>
    </cofactor>
    <text evidence="1">Binds 1 Mg(2+) ion per subunit.</text>
</comment>
<comment type="pathway">
    <text evidence="1">Nucleotide-sugar biosynthesis; UDP-N-acetyl-alpha-D-glucosamine biosynthesis; N-acetyl-alpha-D-glucosamine 1-phosphate from alpha-D-glucosamine 6-phosphate (route II): step 2/2.</text>
</comment>
<comment type="pathway">
    <text evidence="1">Nucleotide-sugar biosynthesis; UDP-N-acetyl-alpha-D-glucosamine biosynthesis; UDP-N-acetyl-alpha-D-glucosamine from N-acetyl-alpha-D-glucosamine 1-phosphate: step 1/1.</text>
</comment>
<comment type="pathway">
    <text evidence="1">Bacterial outer membrane biogenesis; LPS lipid A biosynthesis.</text>
</comment>
<comment type="subunit">
    <text evidence="1">Homotrimer.</text>
</comment>
<comment type="subcellular location">
    <subcellularLocation>
        <location evidence="1">Cytoplasm</location>
    </subcellularLocation>
</comment>
<comment type="similarity">
    <text evidence="1">In the N-terminal section; belongs to the N-acetylglucosamine-1-phosphate uridyltransferase family.</text>
</comment>
<comment type="similarity">
    <text evidence="1">In the C-terminal section; belongs to the transferase hexapeptide repeat family.</text>
</comment>
<gene>
    <name evidence="1" type="primary">glmU</name>
    <name type="ordered locus">Rxyl_0894</name>
</gene>
<accession>Q1AXL7</accession>
<protein>
    <recommendedName>
        <fullName evidence="1">Bifunctional protein GlmU</fullName>
    </recommendedName>
    <domain>
        <recommendedName>
            <fullName evidence="1">UDP-N-acetylglucosamine pyrophosphorylase</fullName>
            <ecNumber evidence="1">2.7.7.23</ecNumber>
        </recommendedName>
        <alternativeName>
            <fullName evidence="1">N-acetylglucosamine-1-phosphate uridyltransferase</fullName>
        </alternativeName>
    </domain>
    <domain>
        <recommendedName>
            <fullName evidence="1">Glucosamine-1-phosphate N-acetyltransferase</fullName>
            <ecNumber evidence="1">2.3.1.157</ecNumber>
        </recommendedName>
    </domain>
</protein>
<proteinExistence type="inferred from homology"/>
<keyword id="KW-0012">Acyltransferase</keyword>
<keyword id="KW-0133">Cell shape</keyword>
<keyword id="KW-0961">Cell wall biogenesis/degradation</keyword>
<keyword id="KW-0963">Cytoplasm</keyword>
<keyword id="KW-0460">Magnesium</keyword>
<keyword id="KW-0479">Metal-binding</keyword>
<keyword id="KW-0511">Multifunctional enzyme</keyword>
<keyword id="KW-0548">Nucleotidyltransferase</keyword>
<keyword id="KW-0573">Peptidoglycan synthesis</keyword>
<keyword id="KW-1185">Reference proteome</keyword>
<keyword id="KW-0677">Repeat</keyword>
<keyword id="KW-0808">Transferase</keyword>